<organism>
    <name type="scientific">Bordetella pertussis (strain Tohama I / ATCC BAA-589 / NCTC 13251)</name>
    <dbReference type="NCBI Taxonomy" id="257313"/>
    <lineage>
        <taxon>Bacteria</taxon>
        <taxon>Pseudomonadati</taxon>
        <taxon>Pseudomonadota</taxon>
        <taxon>Betaproteobacteria</taxon>
        <taxon>Burkholderiales</taxon>
        <taxon>Alcaligenaceae</taxon>
        <taxon>Bordetella</taxon>
    </lineage>
</organism>
<feature type="chain" id="PRO_0000262579" description="Type IV secretion system protein PtlH">
    <location>
        <begin position="1"/>
        <end position="339"/>
    </location>
</feature>
<feature type="binding site" evidence="2">
    <location>
        <begin position="170"/>
        <end position="177"/>
    </location>
    <ligand>
        <name>ATP</name>
        <dbReference type="ChEBI" id="CHEBI:30616"/>
    </ligand>
</feature>
<feature type="mutagenesis site" description="Strongly reduces PTX secretion." evidence="9">
    <original>G</original>
    <variation>S</variation>
    <location>
        <position position="175"/>
    </location>
</feature>
<feature type="mutagenesis site" description="Strongly reduces PTX secretion. Loss of ATPase activity." evidence="5 9">
    <original>K</original>
    <variation>A</variation>
    <location>
        <position position="176"/>
    </location>
</feature>
<reference key="1">
    <citation type="journal article" date="1993" name="Proc. Natl. Acad. Sci. U.S.A.">
        <title>Molecular characterization of an operon required for pertussis toxin secretion.</title>
        <authorList>
            <person name="Weiss A.A."/>
            <person name="Johnson F.D."/>
            <person name="Burns D.L."/>
        </authorList>
    </citation>
    <scope>NUCLEOTIDE SEQUENCE [GENOMIC DNA]</scope>
    <scope>FUNCTION</scope>
    <source>
        <strain>Tohama I / BP338</strain>
    </source>
</reference>
<reference key="2">
    <citation type="journal article" date="2003" name="Nat. Genet.">
        <title>Comparative analysis of the genome sequences of Bordetella pertussis, Bordetella parapertussis and Bordetella bronchiseptica.</title>
        <authorList>
            <person name="Parkhill J."/>
            <person name="Sebaihia M."/>
            <person name="Preston A."/>
            <person name="Murphy L.D."/>
            <person name="Thomson N.R."/>
            <person name="Harris D.E."/>
            <person name="Holden M.T.G."/>
            <person name="Churcher C.M."/>
            <person name="Bentley S.D."/>
            <person name="Mungall K.L."/>
            <person name="Cerdeno-Tarraga A.-M."/>
            <person name="Temple L."/>
            <person name="James K.D."/>
            <person name="Harris B."/>
            <person name="Quail M.A."/>
            <person name="Achtman M."/>
            <person name="Atkin R."/>
            <person name="Baker S."/>
            <person name="Basham D."/>
            <person name="Bason N."/>
            <person name="Cherevach I."/>
            <person name="Chillingworth T."/>
            <person name="Collins M."/>
            <person name="Cronin A."/>
            <person name="Davis P."/>
            <person name="Doggett J."/>
            <person name="Feltwell T."/>
            <person name="Goble A."/>
            <person name="Hamlin N."/>
            <person name="Hauser H."/>
            <person name="Holroyd S."/>
            <person name="Jagels K."/>
            <person name="Leather S."/>
            <person name="Moule S."/>
            <person name="Norberczak H."/>
            <person name="O'Neil S."/>
            <person name="Ormond D."/>
            <person name="Price C."/>
            <person name="Rabbinowitsch E."/>
            <person name="Rutter S."/>
            <person name="Sanders M."/>
            <person name="Saunders D."/>
            <person name="Seeger K."/>
            <person name="Sharp S."/>
            <person name="Simmonds M."/>
            <person name="Skelton J."/>
            <person name="Squares R."/>
            <person name="Squares S."/>
            <person name="Stevens K."/>
            <person name="Unwin L."/>
            <person name="Whitehead S."/>
            <person name="Barrell B.G."/>
            <person name="Maskell D.J."/>
        </authorList>
    </citation>
    <scope>NUCLEOTIDE SEQUENCE [LARGE SCALE GENOMIC DNA]</scope>
    <source>
        <strain>Tohama I / ATCC BAA-589 / NCTC 13251</strain>
    </source>
</reference>
<reference key="3">
    <citation type="journal article" date="1995" name="J. Bacteriol.">
        <title>Synergistic binding of RNA polymerase and BvgA phosphate to the pertussis toxin promoter of Bordetella pertussis.</title>
        <authorList>
            <person name="Boucher P.E."/>
            <person name="Stibitz S."/>
        </authorList>
    </citation>
    <scope>REGULATION BY BVGS/BVGA</scope>
    <source>
        <strain>Tohama I / ATCC BAA-589 / NCTC 13251</strain>
    </source>
</reference>
<reference key="4">
    <citation type="journal article" date="1996" name="Infect. Immun.">
        <title>The pertussis toxin liberation genes of Bordetella pertussis are transcriptionally linked to the pertussis toxin operon.</title>
        <authorList>
            <person name="Ricci S."/>
            <person name="Rappuoli R."/>
            <person name="Scarlato V."/>
        </authorList>
    </citation>
    <scope>COTRANSCRIPTION WITH PTX</scope>
    <source>
        <strain>Wellcome 28</strain>
    </source>
</reference>
<reference key="5">
    <citation type="journal article" date="1997" name="J. Bacteriol.">
        <title>Essential role of the consensus nucleotide-binding site of PtlH in secretion of pertussis toxin from Bordetella pertussis.</title>
        <authorList>
            <person name="Kotob S.I."/>
            <person name="Burns D.L."/>
        </authorList>
    </citation>
    <scope>FUNCTION</scope>
    <scope>MUTAGENESIS OF GLY-175 AND LYS-176</scope>
    <source>
        <strain>Tohama I / BP338</strain>
    </source>
</reference>
<reference key="6">
    <citation type="journal article" date="1999" name="FEMS Microbiol. Lett.">
        <title>Mutants in the ptlA-H genes of Bordetella pertussis are deficient for pertussis toxin secretion.</title>
        <authorList>
            <person name="Craig-Mylius K.A."/>
            <person name="Weiss A.A."/>
        </authorList>
    </citation>
    <scope>FUNCTION</scope>
    <source>
        <strain>Tohama I / BP338</strain>
    </source>
</reference>
<reference key="7">
    <citation type="journal article" date="2004" name="Infect. Immun.">
        <title>Analysis of subassemblies of pertussis toxin subunits in vivo and their interaction with the ptl transport apparatus.</title>
        <authorList>
            <person name="Burns D.L."/>
            <person name="Fiddner S."/>
            <person name="Cheung A.M."/>
            <person name="Verma A."/>
        </authorList>
    </citation>
    <scope>FUNCTION</scope>
    <source>
        <strain>Tohama I / BP338</strain>
    </source>
</reference>
<reference key="8">
    <citation type="journal article" date="2007" name="Infect. Immun.">
        <title>Requirements for assembly of PtlH with the pertussis toxin transporter apparatus of Bordetella pertussis.</title>
        <authorList>
            <person name="Verma A."/>
            <person name="Burns D.L."/>
        </authorList>
    </citation>
    <scope>FUNCTION</scope>
    <scope>ATPASE ACTIVITY</scope>
    <scope>SUBCELLULAR LOCATION</scope>
    <scope>MUTAGENESIS OF LYS-176</scope>
    <source>
        <strain>Tohama I / BP536</strain>
    </source>
</reference>
<accession>Q7VSX3</accession>
<sequence length="339" mass="37159">MNDAAPDRQASVDFHLQALHPWLSRQDIAEICVNRPGQLWYEDRNGWNRQESGALTLDHLHALATATARFCDRDICPERPLLAASLPGGERVQIVVPPACEPGTLSLTIRKPARRIWPLSELLRDTLDLPGVPGASQARPDPLLDPWRRGAWDDFLRLAVQAGKAILVAGQTGSGKTTLMNALSGEIPPRERIVTIEDVRELRLDPATNHVHLLYGTPTEGRTAAVSATELLRAALRMAPTRILLAELRGGEAFDFLQACASGHSGGISTCHAASADMALQRLTLMCMQHPNCQMLPYSTLRALVESVIDIVVVVERRAGQGARRRVVDIWYRDGLPAP</sequence>
<name>PTLH_BORPE</name>
<evidence type="ECO:0000250" key="1">
    <source>
        <dbReference type="UniProtKB" id="P37093"/>
    </source>
</evidence>
<evidence type="ECO:0000255" key="2"/>
<evidence type="ECO:0000269" key="3">
    <source>
    </source>
</evidence>
<evidence type="ECO:0000269" key="4">
    <source>
    </source>
</evidence>
<evidence type="ECO:0000269" key="5">
    <source>
    </source>
</evidence>
<evidence type="ECO:0000269" key="6">
    <source>
    </source>
</evidence>
<evidence type="ECO:0000269" key="7">
    <source>
    </source>
</evidence>
<evidence type="ECO:0000269" key="8">
    <source>
    </source>
</evidence>
<evidence type="ECO:0000269" key="9">
    <source>
    </source>
</evidence>
<evidence type="ECO:0000305" key="10"/>
<keyword id="KW-0067">ATP-binding</keyword>
<keyword id="KW-0997">Cell inner membrane</keyword>
<keyword id="KW-1003">Cell membrane</keyword>
<keyword id="KW-0472">Membrane</keyword>
<keyword id="KW-0547">Nucleotide-binding</keyword>
<keyword id="KW-0653">Protein transport</keyword>
<keyword id="KW-1185">Reference proteome</keyword>
<keyword id="KW-1278">Translocase</keyword>
<keyword id="KW-0813">Transport</keyword>
<keyword id="KW-0843">Virulence</keyword>
<protein>
    <recommendedName>
        <fullName>Type IV secretion system protein PtlH</fullName>
        <ecNumber evidence="1">7.4.2.8</ecNumber>
    </recommendedName>
    <alternativeName>
        <fullName>Pertussis toxin liberation protein H</fullName>
    </alternativeName>
</protein>
<comment type="function">
    <text evidence="1 3 4 5 7 9">ATPase component of the type IV secretion system Ptl required for secretion of assembled pertussis toxin (PTX) through the outer membrane (PubMed:10518754, PubMed:15322034, PubMed:17339350, PubMed:8464913, PubMed:9393726). Acts as a molecular motor to provide the energy that is required for the export of proteins (By similarity).</text>
</comment>
<comment type="catalytic activity">
    <reaction evidence="1">
        <text>ATP + H2O + cellular proteinSide 1 = ADP + phosphate + cellular proteinSide 2.</text>
        <dbReference type="EC" id="7.4.2.8"/>
    </reaction>
</comment>
<comment type="subcellular location">
    <subcellularLocation>
        <location evidence="5">Cell inner membrane</location>
        <topology evidence="5">Peripheral membrane protein</topology>
        <orientation evidence="5">Cytoplasmic side</orientation>
    </subcellularLocation>
    <text evidence="5">Membrane associated. Tight association with the membrane is dependent on the toxin substrate, certain other Ptl proteins, and ATP binding and/or hydrolysis.</text>
</comment>
<comment type="induction">
    <text evidence="6 8">Cotranscribed with ptxABCDE (PubMed:8606119). Activated by the two-component regulatory system BvgS/BvgA (PubMed:7592424).</text>
</comment>
<comment type="similarity">
    <text evidence="10">Belongs to the GSP E family.</text>
</comment>
<proteinExistence type="evidence at protein level"/>
<gene>
    <name type="primary">ptlH</name>
    <name type="ordered locus">BP3796</name>
</gene>
<dbReference type="EC" id="7.4.2.8" evidence="1"/>
<dbReference type="EMBL" id="L10720">
    <property type="status" value="NOT_ANNOTATED_CDS"/>
    <property type="molecule type" value="Genomic_DNA"/>
</dbReference>
<dbReference type="EMBL" id="BX640422">
    <property type="protein sequence ID" value="CAE44051.1"/>
    <property type="molecule type" value="Genomic_DNA"/>
</dbReference>
<dbReference type="RefSeq" id="NP_882295.1">
    <property type="nucleotide sequence ID" value="NC_002929.2"/>
</dbReference>
<dbReference type="RefSeq" id="WP_010929500.1">
    <property type="nucleotide sequence ID" value="NZ_CP039022.1"/>
</dbReference>
<dbReference type="SMR" id="Q7VSX3"/>
<dbReference type="STRING" id="257313.BP3796"/>
<dbReference type="PaxDb" id="257313-BP3796"/>
<dbReference type="GeneID" id="93206115"/>
<dbReference type="KEGG" id="bpe:BP3796"/>
<dbReference type="PATRIC" id="fig|257313.5.peg.4100"/>
<dbReference type="eggNOG" id="COG0630">
    <property type="taxonomic scope" value="Bacteria"/>
</dbReference>
<dbReference type="HOGENOM" id="CLU_005379_3_1_4"/>
<dbReference type="Proteomes" id="UP000002676">
    <property type="component" value="Chromosome"/>
</dbReference>
<dbReference type="GO" id="GO:0005886">
    <property type="term" value="C:plasma membrane"/>
    <property type="evidence" value="ECO:0007669"/>
    <property type="project" value="UniProtKB-SubCell"/>
</dbReference>
<dbReference type="GO" id="GO:0043684">
    <property type="term" value="C:type IV secretion system complex"/>
    <property type="evidence" value="ECO:0007669"/>
    <property type="project" value="InterPro"/>
</dbReference>
<dbReference type="GO" id="GO:0005524">
    <property type="term" value="F:ATP binding"/>
    <property type="evidence" value="ECO:0007669"/>
    <property type="project" value="UniProtKB-KW"/>
</dbReference>
<dbReference type="GO" id="GO:0016887">
    <property type="term" value="F:ATP hydrolysis activity"/>
    <property type="evidence" value="ECO:0007669"/>
    <property type="project" value="InterPro"/>
</dbReference>
<dbReference type="GO" id="GO:0008564">
    <property type="term" value="F:protein-exporting ATPase activity"/>
    <property type="evidence" value="ECO:0007669"/>
    <property type="project" value="UniProtKB-EC"/>
</dbReference>
<dbReference type="GO" id="GO:0044097">
    <property type="term" value="P:secretion by the type IV secretion system"/>
    <property type="evidence" value="ECO:0007669"/>
    <property type="project" value="InterPro"/>
</dbReference>
<dbReference type="CDD" id="cd01130">
    <property type="entry name" value="VirB11-like_ATPase"/>
    <property type="match status" value="1"/>
</dbReference>
<dbReference type="Gene3D" id="3.30.450.90">
    <property type="match status" value="1"/>
</dbReference>
<dbReference type="Gene3D" id="3.40.50.300">
    <property type="entry name" value="P-loop containing nucleotide triphosphate hydrolases"/>
    <property type="match status" value="1"/>
</dbReference>
<dbReference type="InterPro" id="IPR027417">
    <property type="entry name" value="P-loop_NTPase"/>
</dbReference>
<dbReference type="InterPro" id="IPR025662">
    <property type="entry name" value="Sigma_54_int_dom_ATP-bd_1"/>
</dbReference>
<dbReference type="InterPro" id="IPR001482">
    <property type="entry name" value="T2SS/T4SS_dom"/>
</dbReference>
<dbReference type="InterPro" id="IPR050921">
    <property type="entry name" value="T4SS_GSP_E_ATPase"/>
</dbReference>
<dbReference type="InterPro" id="IPR014155">
    <property type="entry name" value="VirB11"/>
</dbReference>
<dbReference type="NCBIfam" id="TIGR02788">
    <property type="entry name" value="VirB11"/>
    <property type="match status" value="1"/>
</dbReference>
<dbReference type="PANTHER" id="PTHR30486">
    <property type="entry name" value="TWITCHING MOTILITY PROTEIN PILT"/>
    <property type="match status" value="1"/>
</dbReference>
<dbReference type="PANTHER" id="PTHR30486:SF6">
    <property type="entry name" value="TYPE IV PILUS RETRACTATION ATPASE PILT"/>
    <property type="match status" value="1"/>
</dbReference>
<dbReference type="Pfam" id="PF00437">
    <property type="entry name" value="T2SSE"/>
    <property type="match status" value="1"/>
</dbReference>
<dbReference type="SUPFAM" id="SSF52540">
    <property type="entry name" value="P-loop containing nucleoside triphosphate hydrolases"/>
    <property type="match status" value="1"/>
</dbReference>